<evidence type="ECO:0000250" key="1"/>
<evidence type="ECO:0000255" key="2"/>
<evidence type="ECO:0000305" key="3"/>
<gene>
    <name type="primary">acy3</name>
</gene>
<organism>
    <name type="scientific">Xenopus laevis</name>
    <name type="common">African clawed frog</name>
    <dbReference type="NCBI Taxonomy" id="8355"/>
    <lineage>
        <taxon>Eukaryota</taxon>
        <taxon>Metazoa</taxon>
        <taxon>Chordata</taxon>
        <taxon>Craniata</taxon>
        <taxon>Vertebrata</taxon>
        <taxon>Euteleostomi</taxon>
        <taxon>Amphibia</taxon>
        <taxon>Batrachia</taxon>
        <taxon>Anura</taxon>
        <taxon>Pipoidea</taxon>
        <taxon>Pipidae</taxon>
        <taxon>Xenopodinae</taxon>
        <taxon>Xenopus</taxon>
        <taxon>Xenopus</taxon>
    </lineage>
</organism>
<reference key="1">
    <citation type="submission" date="2006-10" db="EMBL/GenBank/DDBJ databases">
        <authorList>
            <consortium name="NIH - Xenopus Gene Collection (XGC) project"/>
        </authorList>
    </citation>
    <scope>NUCLEOTIDE SEQUENCE [LARGE SCALE MRNA]</scope>
    <source>
        <tissue>Embryo</tissue>
    </source>
</reference>
<dbReference type="EC" id="3.5.1.114"/>
<dbReference type="EMBL" id="BC125990">
    <property type="protein sequence ID" value="AAI25991.1"/>
    <property type="molecule type" value="mRNA"/>
</dbReference>
<dbReference type="RefSeq" id="NP_001090428.1">
    <property type="nucleotide sequence ID" value="NM_001096959.1"/>
</dbReference>
<dbReference type="SMR" id="A0JMS7"/>
<dbReference type="DNASU" id="779340"/>
<dbReference type="GeneID" id="779340"/>
<dbReference type="KEGG" id="xla:779340"/>
<dbReference type="AGR" id="Xenbase:XB-GENE-6252462"/>
<dbReference type="CTD" id="779340"/>
<dbReference type="Xenbase" id="XB-GENE-6252462">
    <property type="gene designation" value="acy3.L"/>
</dbReference>
<dbReference type="OMA" id="AMHLCHH"/>
<dbReference type="OrthoDB" id="8300214at2759"/>
<dbReference type="Proteomes" id="UP000186698">
    <property type="component" value="Chromosome 2L"/>
</dbReference>
<dbReference type="Bgee" id="779340">
    <property type="expression patterns" value="Expressed in kidney and 16 other cell types or tissues"/>
</dbReference>
<dbReference type="GO" id="GO:0016324">
    <property type="term" value="C:apical plasma membrane"/>
    <property type="evidence" value="ECO:0007669"/>
    <property type="project" value="UniProtKB-SubCell"/>
</dbReference>
<dbReference type="GO" id="GO:0005829">
    <property type="term" value="C:cytosol"/>
    <property type="evidence" value="ECO:0000318"/>
    <property type="project" value="GO_Central"/>
</dbReference>
<dbReference type="GO" id="GO:0004046">
    <property type="term" value="F:aminoacylase activity"/>
    <property type="evidence" value="ECO:0000318"/>
    <property type="project" value="GO_Central"/>
</dbReference>
<dbReference type="GO" id="GO:0016788">
    <property type="term" value="F:hydrolase activity, acting on ester bonds"/>
    <property type="evidence" value="ECO:0007669"/>
    <property type="project" value="InterPro"/>
</dbReference>
<dbReference type="GO" id="GO:0046872">
    <property type="term" value="F:metal ion binding"/>
    <property type="evidence" value="ECO:0007669"/>
    <property type="project" value="UniProtKB-KW"/>
</dbReference>
<dbReference type="CDD" id="cd06909">
    <property type="entry name" value="M14_ASPA"/>
    <property type="match status" value="1"/>
</dbReference>
<dbReference type="FunFam" id="3.40.630.10:FF:000025">
    <property type="entry name" value="aspartoacylase"/>
    <property type="match status" value="1"/>
</dbReference>
<dbReference type="Gene3D" id="2.20.25.160">
    <property type="match status" value="1"/>
</dbReference>
<dbReference type="Gene3D" id="3.40.630.10">
    <property type="entry name" value="Zn peptidases"/>
    <property type="match status" value="1"/>
</dbReference>
<dbReference type="HAMAP" id="MF_00704">
    <property type="entry name" value="Aspartoacylase"/>
    <property type="match status" value="1"/>
</dbReference>
<dbReference type="InterPro" id="IPR050178">
    <property type="entry name" value="AspA/AstE_fam"/>
</dbReference>
<dbReference type="InterPro" id="IPR016708">
    <property type="entry name" value="Aspartoacylase"/>
</dbReference>
<dbReference type="InterPro" id="IPR055438">
    <property type="entry name" value="AstE_AspA_cat"/>
</dbReference>
<dbReference type="InterPro" id="IPR007036">
    <property type="entry name" value="Aste_AspA_hybrid_dom"/>
</dbReference>
<dbReference type="NCBIfam" id="NF002601">
    <property type="entry name" value="PRK02259.1"/>
    <property type="match status" value="1"/>
</dbReference>
<dbReference type="PANTHER" id="PTHR15162">
    <property type="entry name" value="ASPARTOACYLASE"/>
    <property type="match status" value="1"/>
</dbReference>
<dbReference type="PANTHER" id="PTHR15162:SF5">
    <property type="entry name" value="N-ACYL-AROMATIC-L-AMINO ACID AMIDOHYDROLASE (CARBOXYLATE-FORMING)"/>
    <property type="match status" value="1"/>
</dbReference>
<dbReference type="Pfam" id="PF24827">
    <property type="entry name" value="AstE_AspA_cat"/>
    <property type="match status" value="1"/>
</dbReference>
<dbReference type="Pfam" id="PF04952">
    <property type="entry name" value="AstE_AspA_hybrid"/>
    <property type="match status" value="1"/>
</dbReference>
<dbReference type="PIRSF" id="PIRSF018001">
    <property type="entry name" value="Aspartoacylase"/>
    <property type="match status" value="1"/>
</dbReference>
<dbReference type="SUPFAM" id="SSF53187">
    <property type="entry name" value="Zn-dependent exopeptidases"/>
    <property type="match status" value="1"/>
</dbReference>
<name>ACY3_XENLA</name>
<proteinExistence type="evidence at transcript level"/>
<protein>
    <recommendedName>
        <fullName>N-acyl-aromatic-L-amino acid amidohydrolase (carboxylate-forming)</fullName>
        <ecNumber>3.5.1.114</ecNumber>
    </recommendedName>
    <alternativeName>
        <fullName>Aminoacylase-3</fullName>
        <shortName>ACY-3</shortName>
    </alternativeName>
    <alternativeName>
        <fullName>Aspartoacylase-2</fullName>
    </alternativeName>
</protein>
<sequence length="305" mass="34310">MSPPVSQVVVVGGTHGNEMSGVCLAKHWLQDPSELRRKSFTADILLANPIAVERCVRYIDRDLNRSFSHELLSASASESDSYEVKRAREIYQKYGPKQSSLNFVIDLHNTTSNMGTTILLFKGDNFALHLANYLKTKCVDPSFPCHILLIDIPEQGHVHLQSMGKHSISLELGPQPQGVVRTDVLARMKVLVNSSLDFLDLFNQGTEFPSFEAEVHQVLHKADFPRGADGEIQAFIHSELQDKDYLPLKPGDPIFQRLNGDDILYNGEKLIYPVFINESAYYEKKVAFIATEKKHCFVPALKLQN</sequence>
<comment type="function">
    <text evidence="1">Plays an important role in deacetylating mercapturic acids in kidney proximal tubules.</text>
</comment>
<comment type="catalytic activity">
    <reaction>
        <text>an N-acyl-aromatic L-alpha-amino acid + H2O = an aromatic L-alpha-amino acid + a carboxylate</text>
        <dbReference type="Rhea" id="RHEA:54184"/>
        <dbReference type="ChEBI" id="CHEBI:15377"/>
        <dbReference type="ChEBI" id="CHEBI:29067"/>
        <dbReference type="ChEBI" id="CHEBI:84824"/>
        <dbReference type="ChEBI" id="CHEBI:138093"/>
        <dbReference type="EC" id="3.5.1.114"/>
    </reaction>
</comment>
<comment type="catalytic activity">
    <reaction>
        <text>an N-acetyl-L-cysteine-S-conjugate + H2O = an S-substituted L-cysteine + acetate</text>
        <dbReference type="Rhea" id="RHEA:36855"/>
        <dbReference type="ChEBI" id="CHEBI:15377"/>
        <dbReference type="ChEBI" id="CHEBI:30089"/>
        <dbReference type="ChEBI" id="CHEBI:58717"/>
        <dbReference type="ChEBI" id="CHEBI:58718"/>
        <dbReference type="EC" id="3.5.1.114"/>
    </reaction>
</comment>
<comment type="cofactor">
    <cofactor evidence="3">
        <name>Zn(2+)</name>
        <dbReference type="ChEBI" id="CHEBI:29105"/>
    </cofactor>
    <text evidence="3">Binds 1 zinc ion per subunit.</text>
</comment>
<comment type="subunit">
    <text evidence="1">Homotetramer.</text>
</comment>
<comment type="subcellular location">
    <subcellularLocation>
        <location>Apical cell membrane</location>
        <topology>Peripheral membrane protein</topology>
    </subcellularLocation>
    <subcellularLocation>
        <location evidence="1">Cytoplasm</location>
    </subcellularLocation>
</comment>
<comment type="similarity">
    <text evidence="3">Belongs to the AspA/AstE family. Aspartoacylase subfamily.</text>
</comment>
<keyword id="KW-1003">Cell membrane</keyword>
<keyword id="KW-0963">Cytoplasm</keyword>
<keyword id="KW-0378">Hydrolase</keyword>
<keyword id="KW-0472">Membrane</keyword>
<keyword id="KW-0479">Metal-binding</keyword>
<keyword id="KW-1185">Reference proteome</keyword>
<keyword id="KW-0862">Zinc</keyword>
<accession>A0JMS7</accession>
<feature type="chain" id="PRO_0000363365" description="N-acyl-aromatic-L-amino acid amidohydrolase (carboxylate-forming)">
    <location>
        <begin position="1"/>
        <end position="305"/>
    </location>
</feature>
<feature type="binding site" evidence="2">
    <location>
        <position position="15"/>
    </location>
    <ligand>
        <name>Zn(2+)</name>
        <dbReference type="ChEBI" id="CHEBI:29105"/>
    </ligand>
</feature>
<feature type="binding site" evidence="2">
    <location>
        <position position="18"/>
    </location>
    <ligand>
        <name>Zn(2+)</name>
        <dbReference type="ChEBI" id="CHEBI:29105"/>
    </ligand>
</feature>
<feature type="binding site" evidence="2">
    <location>
        <position position="57"/>
    </location>
    <ligand>
        <name>substrate</name>
    </ligand>
</feature>
<feature type="binding site" evidence="2">
    <location>
        <begin position="64"/>
        <end position="65"/>
    </location>
    <ligand>
        <name>substrate</name>
    </ligand>
</feature>
<feature type="binding site" evidence="2">
    <location>
        <position position="108"/>
    </location>
    <ligand>
        <name>Zn(2+)</name>
        <dbReference type="ChEBI" id="CHEBI:29105"/>
    </ligand>
</feature>
<feature type="binding site" evidence="2">
    <location>
        <position position="171"/>
    </location>
    <ligand>
        <name>substrate</name>
    </ligand>
</feature>
<feature type="binding site" evidence="2">
    <location>
        <position position="281"/>
    </location>
    <ligand>
        <name>substrate</name>
    </ligand>
</feature>